<organism>
    <name type="scientific">Salmonella dublin (strain CT_02021853)</name>
    <dbReference type="NCBI Taxonomy" id="439851"/>
    <lineage>
        <taxon>Bacteria</taxon>
        <taxon>Pseudomonadati</taxon>
        <taxon>Pseudomonadota</taxon>
        <taxon>Gammaproteobacteria</taxon>
        <taxon>Enterobacterales</taxon>
        <taxon>Enterobacteriaceae</taxon>
        <taxon>Salmonella</taxon>
    </lineage>
</organism>
<reference key="1">
    <citation type="journal article" date="2011" name="J. Bacteriol.">
        <title>Comparative genomics of 28 Salmonella enterica isolates: evidence for CRISPR-mediated adaptive sublineage evolution.</title>
        <authorList>
            <person name="Fricke W.F."/>
            <person name="Mammel M.K."/>
            <person name="McDermott P.F."/>
            <person name="Tartera C."/>
            <person name="White D.G."/>
            <person name="Leclerc J.E."/>
            <person name="Ravel J."/>
            <person name="Cebula T.A."/>
        </authorList>
    </citation>
    <scope>NUCLEOTIDE SEQUENCE [LARGE SCALE GENOMIC DNA]</scope>
    <source>
        <strain>CT_02021853</strain>
    </source>
</reference>
<sequence length="338" mass="37806">MTTLRLLISDSYDPWFNLAVEECIFRQMPATQRVLFLWRNADTVVIGRAQNPWKECNTRRMEEDNVRLARRSSGGGAVFHDLGNTCFTFMAGKPEYDKTISTHIVLAALNSLGVMADASGRNDLVVKTPDGDRKVSGSAYRETKDRGFHHGTLLLNADLSRLANYLNPDKKKLAAKGITSVRSRVANLTELLPGITHEQVCQAVTEAFFAHYGERVDAEVISPDKTPDLPNFAETFARQSSWEWNFGQAPAFSHLLDERFTWGGVELHFDVEKGVITRAQVFTDSLNPAPLEALGERLQGCQYRVDVLEQACESLIAEFPAQKGELRELAAWMAQAVR</sequence>
<keyword id="KW-0067">ATP-binding</keyword>
<keyword id="KW-0963">Cytoplasm</keyword>
<keyword id="KW-0436">Ligase</keyword>
<keyword id="KW-0547">Nucleotide-binding</keyword>
<evidence type="ECO:0000255" key="1">
    <source>
        <dbReference type="HAMAP-Rule" id="MF_01602"/>
    </source>
</evidence>
<evidence type="ECO:0000255" key="2">
    <source>
        <dbReference type="PROSITE-ProRule" id="PRU01067"/>
    </source>
</evidence>
<accession>B5FTD0</accession>
<protein>
    <recommendedName>
        <fullName evidence="1">Lipoate-protein ligase A</fullName>
        <ecNumber evidence="1">6.3.1.20</ecNumber>
    </recommendedName>
    <alternativeName>
        <fullName evidence="1">Lipoate--protein ligase</fullName>
    </alternativeName>
</protein>
<comment type="function">
    <text evidence="1">Catalyzes both the ATP-dependent activation of exogenously supplied lipoate to lipoyl-AMP and the transfer of the activated lipoyl onto the lipoyl domains of lipoate-dependent enzymes.</text>
</comment>
<comment type="catalytic activity">
    <reaction evidence="1">
        <text>L-lysyl-[lipoyl-carrier protein] + (R)-lipoate + ATP = N(6)-[(R)-lipoyl]-L-lysyl-[lipoyl-carrier protein] + AMP + diphosphate + H(+)</text>
        <dbReference type="Rhea" id="RHEA:49288"/>
        <dbReference type="Rhea" id="RHEA-COMP:10500"/>
        <dbReference type="Rhea" id="RHEA-COMP:10502"/>
        <dbReference type="ChEBI" id="CHEBI:15378"/>
        <dbReference type="ChEBI" id="CHEBI:29969"/>
        <dbReference type="ChEBI" id="CHEBI:30616"/>
        <dbReference type="ChEBI" id="CHEBI:33019"/>
        <dbReference type="ChEBI" id="CHEBI:83088"/>
        <dbReference type="ChEBI" id="CHEBI:83099"/>
        <dbReference type="ChEBI" id="CHEBI:456215"/>
        <dbReference type="EC" id="6.3.1.20"/>
    </reaction>
</comment>
<comment type="pathway">
    <text evidence="1">Protein modification; protein lipoylation via exogenous pathway; protein N(6)-(lipoyl)lysine from lipoate: step 1/2.</text>
</comment>
<comment type="pathway">
    <text evidence="1">Protein modification; protein lipoylation via exogenous pathway; protein N(6)-(lipoyl)lysine from lipoate: step 2/2.</text>
</comment>
<comment type="subunit">
    <text evidence="1">Monomer.</text>
</comment>
<comment type="subcellular location">
    <subcellularLocation>
        <location evidence="1">Cytoplasm</location>
    </subcellularLocation>
</comment>
<comment type="miscellaneous">
    <text evidence="1">In the transfer reaction, the free carboxyl group of lipoic acid is attached via an amide linkage to the epsilon-amino group of a specific lysine residue of lipoyl domains of lipoate-dependent enzymes.</text>
</comment>
<comment type="similarity">
    <text evidence="1">Belongs to the LplA family.</text>
</comment>
<dbReference type="EC" id="6.3.1.20" evidence="1"/>
<dbReference type="EMBL" id="CP001144">
    <property type="protein sequence ID" value="ACH77526.1"/>
    <property type="molecule type" value="Genomic_DNA"/>
</dbReference>
<dbReference type="RefSeq" id="WP_000209763.1">
    <property type="nucleotide sequence ID" value="NC_011205.1"/>
</dbReference>
<dbReference type="SMR" id="B5FTD0"/>
<dbReference type="KEGG" id="sed:SeD_A4987"/>
<dbReference type="HOGENOM" id="CLU_022986_0_1_6"/>
<dbReference type="UniPathway" id="UPA00537">
    <property type="reaction ID" value="UER00594"/>
</dbReference>
<dbReference type="UniPathway" id="UPA00537">
    <property type="reaction ID" value="UER00595"/>
</dbReference>
<dbReference type="Proteomes" id="UP000008322">
    <property type="component" value="Chromosome"/>
</dbReference>
<dbReference type="GO" id="GO:0005829">
    <property type="term" value="C:cytosol"/>
    <property type="evidence" value="ECO:0007669"/>
    <property type="project" value="TreeGrafter"/>
</dbReference>
<dbReference type="GO" id="GO:0005524">
    <property type="term" value="F:ATP binding"/>
    <property type="evidence" value="ECO:0007669"/>
    <property type="project" value="UniProtKB-KW"/>
</dbReference>
<dbReference type="GO" id="GO:0016979">
    <property type="term" value="F:lipoate-protein ligase activity"/>
    <property type="evidence" value="ECO:0007669"/>
    <property type="project" value="UniProtKB-UniRule"/>
</dbReference>
<dbReference type="GO" id="GO:0017118">
    <property type="term" value="F:lipoyltransferase activity"/>
    <property type="evidence" value="ECO:0007669"/>
    <property type="project" value="TreeGrafter"/>
</dbReference>
<dbReference type="GO" id="GO:0036211">
    <property type="term" value="P:protein modification process"/>
    <property type="evidence" value="ECO:0007669"/>
    <property type="project" value="InterPro"/>
</dbReference>
<dbReference type="CDD" id="cd16443">
    <property type="entry name" value="LplA"/>
    <property type="match status" value="1"/>
</dbReference>
<dbReference type="FunFam" id="3.30.930.10:FF:000024">
    <property type="entry name" value="Lipoate-protein ligase A"/>
    <property type="match status" value="1"/>
</dbReference>
<dbReference type="Gene3D" id="3.30.930.10">
    <property type="entry name" value="Bira Bifunctional Protein, Domain 2"/>
    <property type="match status" value="1"/>
</dbReference>
<dbReference type="Gene3D" id="3.30.390.50">
    <property type="entry name" value="CO dehydrogenase flavoprotein, C-terminal domain"/>
    <property type="match status" value="1"/>
</dbReference>
<dbReference type="HAMAP" id="MF_01602">
    <property type="entry name" value="LplA"/>
    <property type="match status" value="1"/>
</dbReference>
<dbReference type="InterPro" id="IPR045864">
    <property type="entry name" value="aa-tRNA-synth_II/BPL/LPL"/>
</dbReference>
<dbReference type="InterPro" id="IPR004143">
    <property type="entry name" value="BPL_LPL_catalytic"/>
</dbReference>
<dbReference type="InterPro" id="IPR023741">
    <property type="entry name" value="Lipoate_ligase_A"/>
</dbReference>
<dbReference type="InterPro" id="IPR019491">
    <property type="entry name" value="Lipoate_protein_ligase_C"/>
</dbReference>
<dbReference type="InterPro" id="IPR004562">
    <property type="entry name" value="LipoylTrfase_LipoateP_Ligase"/>
</dbReference>
<dbReference type="NCBIfam" id="TIGR00545">
    <property type="entry name" value="lipoyltrans"/>
    <property type="match status" value="1"/>
</dbReference>
<dbReference type="PANTHER" id="PTHR12561">
    <property type="entry name" value="LIPOATE-PROTEIN LIGASE"/>
    <property type="match status" value="1"/>
</dbReference>
<dbReference type="PANTHER" id="PTHR12561:SF3">
    <property type="entry name" value="LIPOYLTRANSFERASE 1, MITOCHONDRIAL"/>
    <property type="match status" value="1"/>
</dbReference>
<dbReference type="Pfam" id="PF10437">
    <property type="entry name" value="Lip_prot_lig_C"/>
    <property type="match status" value="1"/>
</dbReference>
<dbReference type="Pfam" id="PF21948">
    <property type="entry name" value="LplA-B_cat"/>
    <property type="match status" value="1"/>
</dbReference>
<dbReference type="SUPFAM" id="SSF55681">
    <property type="entry name" value="Class II aaRS and biotin synthetases"/>
    <property type="match status" value="1"/>
</dbReference>
<dbReference type="SUPFAM" id="SSF82649">
    <property type="entry name" value="SufE/NifU"/>
    <property type="match status" value="1"/>
</dbReference>
<dbReference type="PROSITE" id="PS51733">
    <property type="entry name" value="BPL_LPL_CATALYTIC"/>
    <property type="match status" value="1"/>
</dbReference>
<name>LPLA_SALDC</name>
<feature type="chain" id="PRO_1000148111" description="Lipoate-protein ligase A">
    <location>
        <begin position="1"/>
        <end position="338"/>
    </location>
</feature>
<feature type="domain" description="BPL/LPL catalytic" evidence="2">
    <location>
        <begin position="29"/>
        <end position="216"/>
    </location>
</feature>
<feature type="binding site" evidence="1">
    <location>
        <position position="71"/>
    </location>
    <ligand>
        <name>ATP</name>
        <dbReference type="ChEBI" id="CHEBI:30616"/>
    </ligand>
</feature>
<feature type="binding site" evidence="1">
    <location>
        <begin position="76"/>
        <end position="79"/>
    </location>
    <ligand>
        <name>ATP</name>
        <dbReference type="ChEBI" id="CHEBI:30616"/>
    </ligand>
</feature>
<feature type="binding site" evidence="1">
    <location>
        <position position="134"/>
    </location>
    <ligand>
        <name>(R)-lipoate</name>
        <dbReference type="ChEBI" id="CHEBI:83088"/>
    </ligand>
</feature>
<feature type="binding site" evidence="1">
    <location>
        <position position="134"/>
    </location>
    <ligand>
        <name>ATP</name>
        <dbReference type="ChEBI" id="CHEBI:30616"/>
    </ligand>
</feature>
<proteinExistence type="inferred from homology"/>
<gene>
    <name evidence="1" type="primary">lplA</name>
    <name type="ordered locus">SeD_A4987</name>
</gene>